<sequence>MLRTMFTGKIHRATVTQADLHYVGSVTVDQDLLDAAGILPGELVAVVDVTNGARLETYTIAGERGSGVLGINGAAAHLVHPGDLVILIAYGLMDTAEAQTYEPRVVHVDERNRIVALGSDPADAVVGDVVRPPHAREHGRAREDAATTRA</sequence>
<name>PAND_KOCRD</name>
<organism>
    <name type="scientific">Kocuria rhizophila (strain ATCC 9341 / DSM 348 / NBRC 103217 / DC2201)</name>
    <dbReference type="NCBI Taxonomy" id="378753"/>
    <lineage>
        <taxon>Bacteria</taxon>
        <taxon>Bacillati</taxon>
        <taxon>Actinomycetota</taxon>
        <taxon>Actinomycetes</taxon>
        <taxon>Micrococcales</taxon>
        <taxon>Micrococcaceae</taxon>
        <taxon>Kocuria</taxon>
    </lineage>
</organism>
<feature type="chain" id="PRO_1000124837" description="Aspartate 1-decarboxylase beta chain" evidence="1">
    <location>
        <begin position="1"/>
        <end position="24"/>
    </location>
</feature>
<feature type="chain" id="PRO_1000124838" description="Aspartate 1-decarboxylase alpha chain" evidence="1">
    <location>
        <begin position="25"/>
        <end position="150"/>
    </location>
</feature>
<feature type="active site" description="Schiff-base intermediate with substrate; via pyruvic acid" evidence="1">
    <location>
        <position position="25"/>
    </location>
</feature>
<feature type="active site" description="Proton donor" evidence="1">
    <location>
        <position position="58"/>
    </location>
</feature>
<feature type="binding site" evidence="1">
    <location>
        <position position="57"/>
    </location>
    <ligand>
        <name>substrate</name>
    </ligand>
</feature>
<feature type="binding site" evidence="1">
    <location>
        <begin position="73"/>
        <end position="75"/>
    </location>
    <ligand>
        <name>substrate</name>
    </ligand>
</feature>
<feature type="modified residue" description="Pyruvic acid (Ser)" evidence="1">
    <location>
        <position position="25"/>
    </location>
</feature>
<keyword id="KW-0068">Autocatalytic cleavage</keyword>
<keyword id="KW-0963">Cytoplasm</keyword>
<keyword id="KW-0210">Decarboxylase</keyword>
<keyword id="KW-0456">Lyase</keyword>
<keyword id="KW-0566">Pantothenate biosynthesis</keyword>
<keyword id="KW-0670">Pyruvate</keyword>
<keyword id="KW-1185">Reference proteome</keyword>
<keyword id="KW-0704">Schiff base</keyword>
<keyword id="KW-0865">Zymogen</keyword>
<dbReference type="EC" id="4.1.1.11" evidence="1"/>
<dbReference type="EMBL" id="AP009152">
    <property type="protein sequence ID" value="BAG28725.1"/>
    <property type="molecule type" value="Genomic_DNA"/>
</dbReference>
<dbReference type="RefSeq" id="WP_012397452.1">
    <property type="nucleotide sequence ID" value="NZ_VECX01000002.1"/>
</dbReference>
<dbReference type="SMR" id="B2GGA2"/>
<dbReference type="STRING" id="378753.KRH_03780"/>
<dbReference type="KEGG" id="krh:KRH_03780"/>
<dbReference type="eggNOG" id="COG0853">
    <property type="taxonomic scope" value="Bacteria"/>
</dbReference>
<dbReference type="HOGENOM" id="CLU_115305_0_0_11"/>
<dbReference type="OrthoDB" id="9803983at2"/>
<dbReference type="UniPathway" id="UPA00028">
    <property type="reaction ID" value="UER00002"/>
</dbReference>
<dbReference type="Proteomes" id="UP000008838">
    <property type="component" value="Chromosome"/>
</dbReference>
<dbReference type="GO" id="GO:0005829">
    <property type="term" value="C:cytosol"/>
    <property type="evidence" value="ECO:0007669"/>
    <property type="project" value="TreeGrafter"/>
</dbReference>
<dbReference type="GO" id="GO:0004068">
    <property type="term" value="F:aspartate 1-decarboxylase activity"/>
    <property type="evidence" value="ECO:0007669"/>
    <property type="project" value="UniProtKB-UniRule"/>
</dbReference>
<dbReference type="GO" id="GO:0006523">
    <property type="term" value="P:alanine biosynthetic process"/>
    <property type="evidence" value="ECO:0007669"/>
    <property type="project" value="InterPro"/>
</dbReference>
<dbReference type="GO" id="GO:0015940">
    <property type="term" value="P:pantothenate biosynthetic process"/>
    <property type="evidence" value="ECO:0007669"/>
    <property type="project" value="UniProtKB-UniRule"/>
</dbReference>
<dbReference type="CDD" id="cd06919">
    <property type="entry name" value="Asp_decarbox"/>
    <property type="match status" value="1"/>
</dbReference>
<dbReference type="Gene3D" id="2.40.40.20">
    <property type="match status" value="1"/>
</dbReference>
<dbReference type="HAMAP" id="MF_00446">
    <property type="entry name" value="PanD"/>
    <property type="match status" value="1"/>
</dbReference>
<dbReference type="InterPro" id="IPR009010">
    <property type="entry name" value="Asp_de-COase-like_dom_sf"/>
</dbReference>
<dbReference type="InterPro" id="IPR003190">
    <property type="entry name" value="Asp_decarbox"/>
</dbReference>
<dbReference type="NCBIfam" id="TIGR00223">
    <property type="entry name" value="panD"/>
    <property type="match status" value="1"/>
</dbReference>
<dbReference type="PANTHER" id="PTHR21012">
    <property type="entry name" value="ASPARTATE 1-DECARBOXYLASE"/>
    <property type="match status" value="1"/>
</dbReference>
<dbReference type="PANTHER" id="PTHR21012:SF0">
    <property type="entry name" value="ASPARTATE 1-DECARBOXYLASE"/>
    <property type="match status" value="1"/>
</dbReference>
<dbReference type="Pfam" id="PF02261">
    <property type="entry name" value="Asp_decarbox"/>
    <property type="match status" value="1"/>
</dbReference>
<dbReference type="SUPFAM" id="SSF50692">
    <property type="entry name" value="ADC-like"/>
    <property type="match status" value="1"/>
</dbReference>
<proteinExistence type="inferred from homology"/>
<protein>
    <recommendedName>
        <fullName evidence="1">Aspartate 1-decarboxylase</fullName>
        <ecNumber evidence="1">4.1.1.11</ecNumber>
    </recommendedName>
    <alternativeName>
        <fullName evidence="1">Aspartate alpha-decarboxylase</fullName>
    </alternativeName>
    <component>
        <recommendedName>
            <fullName evidence="1">Aspartate 1-decarboxylase beta chain</fullName>
        </recommendedName>
    </component>
    <component>
        <recommendedName>
            <fullName evidence="1">Aspartate 1-decarboxylase alpha chain</fullName>
        </recommendedName>
    </component>
</protein>
<accession>B2GGA2</accession>
<evidence type="ECO:0000255" key="1">
    <source>
        <dbReference type="HAMAP-Rule" id="MF_00446"/>
    </source>
</evidence>
<gene>
    <name evidence="1" type="primary">panD</name>
    <name type="ordered locus">KRH_03780</name>
</gene>
<comment type="function">
    <text evidence="1">Catalyzes the pyruvoyl-dependent decarboxylation of aspartate to produce beta-alanine.</text>
</comment>
<comment type="catalytic activity">
    <reaction evidence="1">
        <text>L-aspartate + H(+) = beta-alanine + CO2</text>
        <dbReference type="Rhea" id="RHEA:19497"/>
        <dbReference type="ChEBI" id="CHEBI:15378"/>
        <dbReference type="ChEBI" id="CHEBI:16526"/>
        <dbReference type="ChEBI" id="CHEBI:29991"/>
        <dbReference type="ChEBI" id="CHEBI:57966"/>
        <dbReference type="EC" id="4.1.1.11"/>
    </reaction>
</comment>
<comment type="cofactor">
    <cofactor evidence="1">
        <name>pyruvate</name>
        <dbReference type="ChEBI" id="CHEBI:15361"/>
    </cofactor>
    <text evidence="1">Binds 1 pyruvoyl group covalently per subunit.</text>
</comment>
<comment type="pathway">
    <text evidence="1">Cofactor biosynthesis; (R)-pantothenate biosynthesis; beta-alanine from L-aspartate: step 1/1.</text>
</comment>
<comment type="subunit">
    <text evidence="1">Heterooctamer of four alpha and four beta subunits.</text>
</comment>
<comment type="subcellular location">
    <subcellularLocation>
        <location evidence="1">Cytoplasm</location>
    </subcellularLocation>
</comment>
<comment type="PTM">
    <text evidence="1">Is synthesized initially as an inactive proenzyme, which is activated by self-cleavage at a specific serine bond to produce a beta-subunit with a hydroxyl group at its C-terminus and an alpha-subunit with a pyruvoyl group at its N-terminus.</text>
</comment>
<comment type="similarity">
    <text evidence="1">Belongs to the PanD family.</text>
</comment>
<reference key="1">
    <citation type="journal article" date="2008" name="J. Bacteriol.">
        <title>Complete genome sequence of the soil actinomycete Kocuria rhizophila.</title>
        <authorList>
            <person name="Takarada H."/>
            <person name="Sekine M."/>
            <person name="Kosugi H."/>
            <person name="Matsuo Y."/>
            <person name="Fujisawa T."/>
            <person name="Omata S."/>
            <person name="Kishi E."/>
            <person name="Shimizu A."/>
            <person name="Tsukatani N."/>
            <person name="Tanikawa S."/>
            <person name="Fujita N."/>
            <person name="Harayama S."/>
        </authorList>
    </citation>
    <scope>NUCLEOTIDE SEQUENCE [LARGE SCALE GENOMIC DNA]</scope>
    <source>
        <strain>ATCC 9341 / DSM 348 / NBRC 103217 / DC2201</strain>
    </source>
</reference>